<comment type="tissue specificity">
    <text>Nervous tissue.</text>
</comment>
<comment type="developmental stage">
    <text>Expressed relatively early during neuronal differentiation.</text>
</comment>
<comment type="similarity">
    <text evidence="4">Belongs to the stathmin family.</text>
</comment>
<sequence>MTLAAYKEKVKELPLVSIFCSCFLSDPLKKQTYKYEADTVDLTWCAISDMEVIELNKRASGHSFEVILKPPSFDGIPEITATLPQKRDPSLEEIQKKLEAAEERRKYREAELRKHQAEKREHEREVILKAIEENNNFSKMAKEKLAQRMEVNKENREAHLAAMLERLQEKDKHAEEVRKNKEATR</sequence>
<organism>
    <name type="scientific">Xenopus laevis</name>
    <name type="common">African clawed frog</name>
    <dbReference type="NCBI Taxonomy" id="8355"/>
    <lineage>
        <taxon>Eukaryota</taxon>
        <taxon>Metazoa</taxon>
        <taxon>Chordata</taxon>
        <taxon>Craniata</taxon>
        <taxon>Vertebrata</taxon>
        <taxon>Euteleostomi</taxon>
        <taxon>Amphibia</taxon>
        <taxon>Batrachia</taxon>
        <taxon>Anura</taxon>
        <taxon>Pipoidea</taxon>
        <taxon>Pipidae</taxon>
        <taxon>Xenopodinae</taxon>
        <taxon>Xenopus</taxon>
        <taxon>Xenopus</taxon>
    </lineage>
</organism>
<accession>Q09004</accession>
<accession>Q5D085</accession>
<reference key="1">
    <citation type="journal article" date="1993" name="J. Biol. Chem.">
        <title>Stathmin gene family: phylogenetic conservation and developmental regulation in Xenopus.</title>
        <authorList>
            <person name="Maucuer A."/>
            <person name="Moreau J."/>
            <person name="Mechali M."/>
            <person name="Sobel A."/>
        </authorList>
    </citation>
    <scope>NUCLEOTIDE SEQUENCE [MRNA]</scope>
    <source>
        <tissue>Brain</tissue>
    </source>
</reference>
<reference key="2">
    <citation type="submission" date="2003-06" db="EMBL/GenBank/DDBJ databases">
        <authorList>
            <consortium name="NIH - Xenopus Gene Collection (XGC) project"/>
        </authorList>
    </citation>
    <scope>NUCLEOTIDE SEQUENCE [LARGE SCALE MRNA]</scope>
</reference>
<gene>
    <name type="primary">stmn4</name>
</gene>
<evidence type="ECO:0000255" key="1"/>
<evidence type="ECO:0000255" key="2">
    <source>
        <dbReference type="PROSITE-ProRule" id="PRU00998"/>
    </source>
</evidence>
<evidence type="ECO:0000256" key="3">
    <source>
        <dbReference type="SAM" id="MobiDB-lite"/>
    </source>
</evidence>
<evidence type="ECO:0000305" key="4"/>
<protein>
    <recommendedName>
        <fullName>Stathmin-4</fullName>
    </recommendedName>
    <alternativeName>
        <fullName>Stathmin-like protein B3</fullName>
        <shortName>xB3</shortName>
    </alternativeName>
</protein>
<feature type="chain" id="PRO_0000182409" description="Stathmin-4">
    <location>
        <begin position="1"/>
        <end position="185"/>
    </location>
</feature>
<feature type="domain" description="SLD" evidence="2">
    <location>
        <begin position="48"/>
        <end position="185"/>
    </location>
</feature>
<feature type="region of interest" description="Disordered" evidence="3">
    <location>
        <begin position="165"/>
        <end position="185"/>
    </location>
</feature>
<feature type="coiled-coil region" evidence="1">
    <location>
        <begin position="90"/>
        <end position="185"/>
    </location>
</feature>
<feature type="compositionally biased region" description="Basic and acidic residues" evidence="3">
    <location>
        <begin position="166"/>
        <end position="185"/>
    </location>
</feature>
<name>STMN4_XENLA</name>
<dbReference type="EMBL" id="X71435">
    <property type="protein sequence ID" value="CAA50566.1"/>
    <property type="molecule type" value="mRNA"/>
</dbReference>
<dbReference type="EMBL" id="BC054158">
    <property type="protein sequence ID" value="AAH54158.1"/>
    <property type="molecule type" value="mRNA"/>
</dbReference>
<dbReference type="PIR" id="I51696">
    <property type="entry name" value="I51696"/>
</dbReference>
<dbReference type="RefSeq" id="NP_001080837.1">
    <property type="nucleotide sequence ID" value="NM_001087368.2"/>
</dbReference>
<dbReference type="RefSeq" id="XP_018119740.1">
    <property type="nucleotide sequence ID" value="XM_018264251.1"/>
</dbReference>
<dbReference type="SMR" id="Q09004"/>
<dbReference type="BioGRID" id="98773">
    <property type="interactions" value="1"/>
</dbReference>
<dbReference type="DNASU" id="380531"/>
<dbReference type="GeneID" id="380531"/>
<dbReference type="KEGG" id="xla:380531"/>
<dbReference type="AGR" id="Xenbase:XB-GENE-17344341"/>
<dbReference type="CTD" id="380531"/>
<dbReference type="Xenbase" id="XB-GENE-17344341">
    <property type="gene designation" value="stmn4.S"/>
</dbReference>
<dbReference type="OMA" id="RWRGLSH"/>
<dbReference type="OrthoDB" id="5986631at2759"/>
<dbReference type="Proteomes" id="UP000186698">
    <property type="component" value="Chromosome 5S"/>
</dbReference>
<dbReference type="Bgee" id="380531">
    <property type="expression patterns" value="Expressed in brain and 7 other cell types or tissues"/>
</dbReference>
<dbReference type="GO" id="GO:0005737">
    <property type="term" value="C:cytoplasm"/>
    <property type="evidence" value="ECO:0000318"/>
    <property type="project" value="GO_Central"/>
</dbReference>
<dbReference type="GO" id="GO:0043005">
    <property type="term" value="C:neuron projection"/>
    <property type="evidence" value="ECO:0000318"/>
    <property type="project" value="GO_Central"/>
</dbReference>
<dbReference type="GO" id="GO:0015631">
    <property type="term" value="F:tubulin binding"/>
    <property type="evidence" value="ECO:0000318"/>
    <property type="project" value="GO_Central"/>
</dbReference>
<dbReference type="GO" id="GO:0007019">
    <property type="term" value="P:microtubule depolymerization"/>
    <property type="evidence" value="ECO:0000318"/>
    <property type="project" value="GO_Central"/>
</dbReference>
<dbReference type="GO" id="GO:0031175">
    <property type="term" value="P:neuron projection development"/>
    <property type="evidence" value="ECO:0000318"/>
    <property type="project" value="GO_Central"/>
</dbReference>
<dbReference type="GO" id="GO:0031110">
    <property type="term" value="P:regulation of microtubule polymerization or depolymerization"/>
    <property type="evidence" value="ECO:0000318"/>
    <property type="project" value="GO_Central"/>
</dbReference>
<dbReference type="Gene3D" id="6.10.280.30">
    <property type="match status" value="1"/>
</dbReference>
<dbReference type="InterPro" id="IPR030514">
    <property type="entry name" value="Stathmin_CS"/>
</dbReference>
<dbReference type="InterPro" id="IPR000956">
    <property type="entry name" value="Stathmin_fam"/>
</dbReference>
<dbReference type="InterPro" id="IPR036002">
    <property type="entry name" value="Stathmin_sf"/>
</dbReference>
<dbReference type="PANTHER" id="PTHR10104">
    <property type="entry name" value="STATHMIN"/>
    <property type="match status" value="1"/>
</dbReference>
<dbReference type="PANTHER" id="PTHR10104:SF6">
    <property type="entry name" value="STATHMIN-4"/>
    <property type="match status" value="1"/>
</dbReference>
<dbReference type="Pfam" id="PF00836">
    <property type="entry name" value="Stathmin"/>
    <property type="match status" value="1"/>
</dbReference>
<dbReference type="PIRSF" id="PIRSF002285">
    <property type="entry name" value="Stathmin"/>
    <property type="match status" value="1"/>
</dbReference>
<dbReference type="PRINTS" id="PR00345">
    <property type="entry name" value="STATHMIN"/>
</dbReference>
<dbReference type="SUPFAM" id="SSF101494">
    <property type="entry name" value="Stathmin"/>
    <property type="match status" value="1"/>
</dbReference>
<dbReference type="PROSITE" id="PS00563">
    <property type="entry name" value="STATHMIN_1"/>
    <property type="match status" value="1"/>
</dbReference>
<dbReference type="PROSITE" id="PS01041">
    <property type="entry name" value="STATHMIN_2"/>
    <property type="match status" value="1"/>
</dbReference>
<dbReference type="PROSITE" id="PS51663">
    <property type="entry name" value="STATHMIN_3"/>
    <property type="match status" value="1"/>
</dbReference>
<proteinExistence type="evidence at transcript level"/>
<keyword id="KW-0175">Coiled coil</keyword>
<keyword id="KW-1185">Reference proteome</keyword>